<accession>Q73JJ7</accession>
<proteinExistence type="inferred from homology"/>
<keyword id="KW-0240">DNA-directed RNA polymerase</keyword>
<keyword id="KW-0548">Nucleotidyltransferase</keyword>
<keyword id="KW-1185">Reference proteome</keyword>
<keyword id="KW-0804">Transcription</keyword>
<keyword id="KW-0808">Transferase</keyword>
<organism>
    <name type="scientific">Treponema denticola (strain ATCC 35405 / DSM 14222 / CIP 103919 / JCM 8153 / KCTC 15104)</name>
    <dbReference type="NCBI Taxonomy" id="243275"/>
    <lineage>
        <taxon>Bacteria</taxon>
        <taxon>Pseudomonadati</taxon>
        <taxon>Spirochaetota</taxon>
        <taxon>Spirochaetia</taxon>
        <taxon>Spirochaetales</taxon>
        <taxon>Treponemataceae</taxon>
        <taxon>Treponema</taxon>
    </lineage>
</organism>
<protein>
    <recommendedName>
        <fullName evidence="1">DNA-directed RNA polymerase subunit beta</fullName>
        <shortName evidence="1">RNAP subunit beta</shortName>
        <ecNumber evidence="1">2.7.7.6</ecNumber>
    </recommendedName>
    <alternativeName>
        <fullName evidence="1">RNA polymerase subunit beta</fullName>
    </alternativeName>
    <alternativeName>
        <fullName evidence="1">Transcriptase subunit beta</fullName>
    </alternativeName>
</protein>
<dbReference type="EC" id="2.7.7.6" evidence="1"/>
<dbReference type="EMBL" id="AE017226">
    <property type="protein sequence ID" value="AAS12939.1"/>
    <property type="molecule type" value="Genomic_DNA"/>
</dbReference>
<dbReference type="RefSeq" id="NP_973020.1">
    <property type="nucleotide sequence ID" value="NC_002967.9"/>
</dbReference>
<dbReference type="RefSeq" id="WP_002680361.1">
    <property type="nucleotide sequence ID" value="NC_002967.9"/>
</dbReference>
<dbReference type="SMR" id="Q73JJ7"/>
<dbReference type="STRING" id="243275.TDE_2421"/>
<dbReference type="PaxDb" id="243275-TDE_2421"/>
<dbReference type="GeneID" id="2739846"/>
<dbReference type="KEGG" id="tde:TDE_2421"/>
<dbReference type="PATRIC" id="fig|243275.7.peg.2288"/>
<dbReference type="eggNOG" id="COG0085">
    <property type="taxonomic scope" value="Bacteria"/>
</dbReference>
<dbReference type="HOGENOM" id="CLU_000524_4_3_12"/>
<dbReference type="OrthoDB" id="9803954at2"/>
<dbReference type="Proteomes" id="UP000008212">
    <property type="component" value="Chromosome"/>
</dbReference>
<dbReference type="GO" id="GO:0000428">
    <property type="term" value="C:DNA-directed RNA polymerase complex"/>
    <property type="evidence" value="ECO:0007669"/>
    <property type="project" value="UniProtKB-KW"/>
</dbReference>
<dbReference type="GO" id="GO:0003677">
    <property type="term" value="F:DNA binding"/>
    <property type="evidence" value="ECO:0007669"/>
    <property type="project" value="UniProtKB-UniRule"/>
</dbReference>
<dbReference type="GO" id="GO:0003899">
    <property type="term" value="F:DNA-directed RNA polymerase activity"/>
    <property type="evidence" value="ECO:0007669"/>
    <property type="project" value="UniProtKB-UniRule"/>
</dbReference>
<dbReference type="GO" id="GO:0032549">
    <property type="term" value="F:ribonucleoside binding"/>
    <property type="evidence" value="ECO:0007669"/>
    <property type="project" value="InterPro"/>
</dbReference>
<dbReference type="GO" id="GO:0006351">
    <property type="term" value="P:DNA-templated transcription"/>
    <property type="evidence" value="ECO:0007669"/>
    <property type="project" value="UniProtKB-UniRule"/>
</dbReference>
<dbReference type="CDD" id="cd00653">
    <property type="entry name" value="RNA_pol_B_RPB2"/>
    <property type="match status" value="1"/>
</dbReference>
<dbReference type="Gene3D" id="2.40.50.100">
    <property type="match status" value="1"/>
</dbReference>
<dbReference type="Gene3D" id="2.40.50.150">
    <property type="match status" value="1"/>
</dbReference>
<dbReference type="Gene3D" id="3.90.1100.10">
    <property type="match status" value="2"/>
</dbReference>
<dbReference type="Gene3D" id="2.30.150.10">
    <property type="entry name" value="DNA-directed RNA polymerase, beta subunit, external 1 domain"/>
    <property type="match status" value="1"/>
</dbReference>
<dbReference type="Gene3D" id="2.40.270.10">
    <property type="entry name" value="DNA-directed RNA polymerase, subunit 2, domain 6"/>
    <property type="match status" value="2"/>
</dbReference>
<dbReference type="Gene3D" id="3.90.1800.10">
    <property type="entry name" value="RNA polymerase alpha subunit dimerisation domain"/>
    <property type="match status" value="1"/>
</dbReference>
<dbReference type="Gene3D" id="3.90.1110.10">
    <property type="entry name" value="RNA polymerase Rpb2, domain 2"/>
    <property type="match status" value="2"/>
</dbReference>
<dbReference type="HAMAP" id="MF_01321">
    <property type="entry name" value="RNApol_bact_RpoB"/>
    <property type="match status" value="1"/>
</dbReference>
<dbReference type="InterPro" id="IPR042107">
    <property type="entry name" value="DNA-dir_RNA_pol_bsu_ext_1_sf"/>
</dbReference>
<dbReference type="InterPro" id="IPR019462">
    <property type="entry name" value="DNA-dir_RNA_pol_bsu_external_1"/>
</dbReference>
<dbReference type="InterPro" id="IPR015712">
    <property type="entry name" value="DNA-dir_RNA_pol_su2"/>
</dbReference>
<dbReference type="InterPro" id="IPR007120">
    <property type="entry name" value="DNA-dir_RNAP_su2_dom"/>
</dbReference>
<dbReference type="InterPro" id="IPR037033">
    <property type="entry name" value="DNA-dir_RNAP_su2_hyb_sf"/>
</dbReference>
<dbReference type="InterPro" id="IPR010243">
    <property type="entry name" value="RNA_pol_bsu_bac"/>
</dbReference>
<dbReference type="InterPro" id="IPR007644">
    <property type="entry name" value="RNA_pol_bsu_protrusion"/>
</dbReference>
<dbReference type="InterPro" id="IPR007642">
    <property type="entry name" value="RNA_pol_Rpb2_2"/>
</dbReference>
<dbReference type="InterPro" id="IPR037034">
    <property type="entry name" value="RNA_pol_Rpb2_2_sf"/>
</dbReference>
<dbReference type="InterPro" id="IPR007645">
    <property type="entry name" value="RNA_pol_Rpb2_3"/>
</dbReference>
<dbReference type="InterPro" id="IPR007641">
    <property type="entry name" value="RNA_pol_Rpb2_7"/>
</dbReference>
<dbReference type="InterPro" id="IPR014724">
    <property type="entry name" value="RNA_pol_RPB2_OB-fold"/>
</dbReference>
<dbReference type="NCBIfam" id="NF001616">
    <property type="entry name" value="PRK00405.1"/>
    <property type="match status" value="1"/>
</dbReference>
<dbReference type="NCBIfam" id="TIGR02013">
    <property type="entry name" value="rpoB"/>
    <property type="match status" value="1"/>
</dbReference>
<dbReference type="PANTHER" id="PTHR20856">
    <property type="entry name" value="DNA-DIRECTED RNA POLYMERASE I SUBUNIT 2"/>
    <property type="match status" value="1"/>
</dbReference>
<dbReference type="Pfam" id="PF04563">
    <property type="entry name" value="RNA_pol_Rpb2_1"/>
    <property type="match status" value="1"/>
</dbReference>
<dbReference type="Pfam" id="PF04561">
    <property type="entry name" value="RNA_pol_Rpb2_2"/>
    <property type="match status" value="1"/>
</dbReference>
<dbReference type="Pfam" id="PF04565">
    <property type="entry name" value="RNA_pol_Rpb2_3"/>
    <property type="match status" value="1"/>
</dbReference>
<dbReference type="Pfam" id="PF10385">
    <property type="entry name" value="RNA_pol_Rpb2_45"/>
    <property type="match status" value="1"/>
</dbReference>
<dbReference type="Pfam" id="PF00562">
    <property type="entry name" value="RNA_pol_Rpb2_6"/>
    <property type="match status" value="1"/>
</dbReference>
<dbReference type="Pfam" id="PF04560">
    <property type="entry name" value="RNA_pol_Rpb2_7"/>
    <property type="match status" value="1"/>
</dbReference>
<dbReference type="SUPFAM" id="SSF64484">
    <property type="entry name" value="beta and beta-prime subunits of DNA dependent RNA-polymerase"/>
    <property type="match status" value="1"/>
</dbReference>
<evidence type="ECO:0000255" key="1">
    <source>
        <dbReference type="HAMAP-Rule" id="MF_01321"/>
    </source>
</evidence>
<reference key="1">
    <citation type="journal article" date="2004" name="Proc. Natl. Acad. Sci. U.S.A.">
        <title>Comparison of the genome of the oral pathogen Treponema denticola with other spirochete genomes.</title>
        <authorList>
            <person name="Seshadri R."/>
            <person name="Myers G.S.A."/>
            <person name="Tettelin H."/>
            <person name="Eisen J.A."/>
            <person name="Heidelberg J.F."/>
            <person name="Dodson R.J."/>
            <person name="Davidsen T.M."/>
            <person name="DeBoy R.T."/>
            <person name="Fouts D.E."/>
            <person name="Haft D.H."/>
            <person name="Selengut J."/>
            <person name="Ren Q."/>
            <person name="Brinkac L.M."/>
            <person name="Madupu R."/>
            <person name="Kolonay J.F."/>
            <person name="Durkin S.A."/>
            <person name="Daugherty S.C."/>
            <person name="Shetty J."/>
            <person name="Shvartsbeyn A."/>
            <person name="Gebregeorgis E."/>
            <person name="Geer K."/>
            <person name="Tsegaye G."/>
            <person name="Malek J.A."/>
            <person name="Ayodeji B."/>
            <person name="Shatsman S."/>
            <person name="McLeod M.P."/>
            <person name="Smajs D."/>
            <person name="Howell J.K."/>
            <person name="Pal S."/>
            <person name="Amin A."/>
            <person name="Vashisth P."/>
            <person name="McNeill T.Z."/>
            <person name="Xiang Q."/>
            <person name="Sodergren E."/>
            <person name="Baca E."/>
            <person name="Weinstock G.M."/>
            <person name="Norris S.J."/>
            <person name="Fraser C.M."/>
            <person name="Paulsen I.T."/>
        </authorList>
    </citation>
    <scope>NUCLEOTIDE SEQUENCE [LARGE SCALE GENOMIC DNA]</scope>
    <source>
        <strain>ATCC 35405 / DSM 14222 / CIP 103919 / JCM 8153 / KCTC 15104</strain>
    </source>
</reference>
<feature type="chain" id="PRO_0000224118" description="DNA-directed RNA polymerase subunit beta">
    <location>
        <begin position="1"/>
        <end position="1167"/>
    </location>
</feature>
<name>RPOB_TREDE</name>
<gene>
    <name evidence="1" type="primary">rpoB</name>
    <name type="ordered locus">TDE_2421</name>
</gene>
<sequence length="1167" mass="131849">MFARGQKIDRRYYGKDVPNFMELPNLIDIQIQSYNKFLNKEKKTDETEIEGLESVFHTTFPIESTNEDMALQYLSYSLDYDSIKFSEIECKQKGLTYSVPLKAEIDLFFKETKEIRRKNIYMGDIPLMTERGTFIINGAERVVVSQIHRSPGVIFSHEKGVYSSRIIPYRGTWLEFEIDQKKELIYAKLDSKKRILGTIFLRALGYDTREKIIDLFYKTKTAKISPDRTEYEELIGQVLARDVYVKGEDGEKRKMHQAGEKIHPHNIDDLIQNDVKKITIIDFKGKDSLDSQIIINCFEREEIKYTPDPAVNDEPTVEDALNAVYSVIRPGDPITYENAKEDLHNMFFTARRYDIGKVGRYKLNKKFDYSDDVKGTTLIEEDIFKTMKFLIKVYIGEESIDDIDHLGNRRIRSVGEIMTDVLKKAFSRMERIARDRMSSKEMDTIKPKDLISIKPIVAAIKEFFGASQLSQFMDQVNPLAELTHKRRLNALGPGGLSRDRAGFEVREVHYTHYGRMCPIETPEGPNIGLIVSMANYARVNEYGFLEAPYVKVVNGVATREIEYLSAMDEDKYFIGQVSSAIGKDGKINTDQVSCRKLGDYTSISPKDIQYMDVSPKQIISVSASLIPFLEHDDANRALMGSNMQRQAVPLVFPEPPRVGTGMEKKCAYDSGVLVKAKRSGKVEFVSSDTIIIAPEKGKNKEDKDEYTLLKYQRTNQETCYHQRPIVNVGDTVKAGQPIADGPATYNGELALGRNILVGFVPWNGYNYEDAILISRRVVKEDMFTSIHIKELSTDVRETKLGAEKMTCDIPNKSEKSLDDLDSEGIIRIGSKVKPGDILVGKVTPKSESDTTPEFKLLNSIFGEKAKEVRDTSLRVPHGTEGTVIDVQRLKRDQGDDLSPGVDEVVKVLIATKRKLREGDKMAGRHGNKGLVARILPEEDMPYMEDGTPLDICLNPLGVPSRMNIGQILESELGLAGLKLNEWYESPVFESPSMEQIEAKLKEAGYPTSSKVKLRDGLTGRLFENEVFVGVIYFLKLAHLVDDKMHARSTGPYSLVTQQPLGGKAQFGGQRLGEMEVWALEAYGAANTLQELITIKSDDMHGRSKIYESIVKGEPSSSAGIPESFNVLVQELRGLALDFTIYDAKGQQIPLTERDEELIKREKTSTNF</sequence>
<comment type="function">
    <text evidence="1">DNA-dependent RNA polymerase catalyzes the transcription of DNA into RNA using the four ribonucleoside triphosphates as substrates.</text>
</comment>
<comment type="catalytic activity">
    <reaction evidence="1">
        <text>RNA(n) + a ribonucleoside 5'-triphosphate = RNA(n+1) + diphosphate</text>
        <dbReference type="Rhea" id="RHEA:21248"/>
        <dbReference type="Rhea" id="RHEA-COMP:14527"/>
        <dbReference type="Rhea" id="RHEA-COMP:17342"/>
        <dbReference type="ChEBI" id="CHEBI:33019"/>
        <dbReference type="ChEBI" id="CHEBI:61557"/>
        <dbReference type="ChEBI" id="CHEBI:140395"/>
        <dbReference type="EC" id="2.7.7.6"/>
    </reaction>
</comment>
<comment type="subunit">
    <text evidence="1">The RNAP catalytic core consists of 2 alpha, 1 beta, 1 beta' and 1 omega subunit. When a sigma factor is associated with the core the holoenzyme is formed, which can initiate transcription.</text>
</comment>
<comment type="similarity">
    <text evidence="1">Belongs to the RNA polymerase beta chain family.</text>
</comment>